<feature type="chain" id="PRO_1000126430" description="Small ribosomal subunit protein bS20">
    <location>
        <begin position="1"/>
        <end position="97"/>
    </location>
</feature>
<accession>B7KG02</accession>
<keyword id="KW-1185">Reference proteome</keyword>
<keyword id="KW-0687">Ribonucleoprotein</keyword>
<keyword id="KW-0689">Ribosomal protein</keyword>
<keyword id="KW-0694">RNA-binding</keyword>
<keyword id="KW-0699">rRNA-binding</keyword>
<comment type="function">
    <text evidence="1">Binds directly to 16S ribosomal RNA.</text>
</comment>
<comment type="similarity">
    <text evidence="1">Belongs to the bacterial ribosomal protein bS20 family.</text>
</comment>
<protein>
    <recommendedName>
        <fullName evidence="1">Small ribosomal subunit protein bS20</fullName>
    </recommendedName>
    <alternativeName>
        <fullName evidence="2">30S ribosomal protein S20</fullName>
    </alternativeName>
</protein>
<reference key="1">
    <citation type="journal article" date="2011" name="MBio">
        <title>Novel metabolic attributes of the genus Cyanothece, comprising a group of unicellular nitrogen-fixing Cyanobacteria.</title>
        <authorList>
            <person name="Bandyopadhyay A."/>
            <person name="Elvitigala T."/>
            <person name="Welsh E."/>
            <person name="Stockel J."/>
            <person name="Liberton M."/>
            <person name="Min H."/>
            <person name="Sherman L.A."/>
            <person name="Pakrasi H.B."/>
        </authorList>
    </citation>
    <scope>NUCLEOTIDE SEQUENCE [LARGE SCALE GENOMIC DNA]</scope>
    <source>
        <strain>PCC 7424</strain>
    </source>
</reference>
<organism>
    <name type="scientific">Gloeothece citriformis (strain PCC 7424)</name>
    <name type="common">Cyanothece sp. (strain PCC 7424)</name>
    <dbReference type="NCBI Taxonomy" id="65393"/>
    <lineage>
        <taxon>Bacteria</taxon>
        <taxon>Bacillati</taxon>
        <taxon>Cyanobacteriota</taxon>
        <taxon>Cyanophyceae</taxon>
        <taxon>Oscillatoriophycideae</taxon>
        <taxon>Chroococcales</taxon>
        <taxon>Aphanothecaceae</taxon>
        <taxon>Gloeothece</taxon>
        <taxon>Gloeothece citriformis</taxon>
    </lineage>
</organism>
<evidence type="ECO:0000255" key="1">
    <source>
        <dbReference type="HAMAP-Rule" id="MF_00500"/>
    </source>
</evidence>
<evidence type="ECO:0000305" key="2"/>
<proteinExistence type="inferred from homology"/>
<dbReference type="EMBL" id="CP001291">
    <property type="protein sequence ID" value="ACK69195.1"/>
    <property type="molecule type" value="Genomic_DNA"/>
</dbReference>
<dbReference type="RefSeq" id="WP_012598142.1">
    <property type="nucleotide sequence ID" value="NC_011729.1"/>
</dbReference>
<dbReference type="SMR" id="B7KG02"/>
<dbReference type="STRING" id="65393.PCC7424_0739"/>
<dbReference type="KEGG" id="cyc:PCC7424_0739"/>
<dbReference type="eggNOG" id="COG0268">
    <property type="taxonomic scope" value="Bacteria"/>
</dbReference>
<dbReference type="HOGENOM" id="CLU_160655_5_0_3"/>
<dbReference type="OrthoDB" id="9808392at2"/>
<dbReference type="Proteomes" id="UP000002384">
    <property type="component" value="Chromosome"/>
</dbReference>
<dbReference type="GO" id="GO:0005829">
    <property type="term" value="C:cytosol"/>
    <property type="evidence" value="ECO:0007669"/>
    <property type="project" value="TreeGrafter"/>
</dbReference>
<dbReference type="GO" id="GO:0015935">
    <property type="term" value="C:small ribosomal subunit"/>
    <property type="evidence" value="ECO:0007669"/>
    <property type="project" value="TreeGrafter"/>
</dbReference>
<dbReference type="GO" id="GO:0070181">
    <property type="term" value="F:small ribosomal subunit rRNA binding"/>
    <property type="evidence" value="ECO:0007669"/>
    <property type="project" value="TreeGrafter"/>
</dbReference>
<dbReference type="GO" id="GO:0003735">
    <property type="term" value="F:structural constituent of ribosome"/>
    <property type="evidence" value="ECO:0007669"/>
    <property type="project" value="InterPro"/>
</dbReference>
<dbReference type="GO" id="GO:0006412">
    <property type="term" value="P:translation"/>
    <property type="evidence" value="ECO:0007669"/>
    <property type="project" value="UniProtKB-UniRule"/>
</dbReference>
<dbReference type="FunFam" id="1.20.58.110:FF:000001">
    <property type="entry name" value="30S ribosomal protein S20"/>
    <property type="match status" value="1"/>
</dbReference>
<dbReference type="Gene3D" id="1.20.58.110">
    <property type="entry name" value="Ribosomal protein S20"/>
    <property type="match status" value="1"/>
</dbReference>
<dbReference type="HAMAP" id="MF_00500">
    <property type="entry name" value="Ribosomal_bS20"/>
    <property type="match status" value="1"/>
</dbReference>
<dbReference type="InterPro" id="IPR002583">
    <property type="entry name" value="Ribosomal_bS20"/>
</dbReference>
<dbReference type="InterPro" id="IPR036510">
    <property type="entry name" value="Ribosomal_bS20_sf"/>
</dbReference>
<dbReference type="NCBIfam" id="TIGR00029">
    <property type="entry name" value="S20"/>
    <property type="match status" value="1"/>
</dbReference>
<dbReference type="PANTHER" id="PTHR33398">
    <property type="entry name" value="30S RIBOSOMAL PROTEIN S20"/>
    <property type="match status" value="1"/>
</dbReference>
<dbReference type="PANTHER" id="PTHR33398:SF1">
    <property type="entry name" value="SMALL RIBOSOMAL SUBUNIT PROTEIN BS20C"/>
    <property type="match status" value="1"/>
</dbReference>
<dbReference type="Pfam" id="PF01649">
    <property type="entry name" value="Ribosomal_S20p"/>
    <property type="match status" value="1"/>
</dbReference>
<dbReference type="SUPFAM" id="SSF46992">
    <property type="entry name" value="Ribosomal protein S20"/>
    <property type="match status" value="1"/>
</dbReference>
<gene>
    <name evidence="1" type="primary">rpsT</name>
    <name evidence="1" type="synonym">rps20</name>
    <name type="ordered locus">PCC7424_0739</name>
</gene>
<name>RS20_GLOC7</name>
<sequence>MANIKSAIKRIQIAERNRLRNKSYKSAVKTLMKKYYAAVEDYKANPSEEAKKAVDQAMSAAYSKIDKAVKCRILHRNNGARKKSQLANALKQVTTAS</sequence>